<comment type="function">
    <text evidence="1">Cell division inhibitor that blocks the formation of polar Z ring septums. Rapidly oscillates between the poles of the cell to destabilize FtsZ filaments that have formed before they mature into polar Z rings. Prevents FtsZ polymerization.</text>
</comment>
<comment type="subunit">
    <text evidence="1">Interacts with MinD and FtsZ.</text>
</comment>
<comment type="similarity">
    <text evidence="1">Belongs to the MinC family.</text>
</comment>
<dbReference type="EMBL" id="AE016879">
    <property type="protein sequence ID" value="AAP28381.1"/>
    <property type="molecule type" value="Genomic_DNA"/>
</dbReference>
<dbReference type="EMBL" id="AE017334">
    <property type="protein sequence ID" value="AAT33804.1"/>
    <property type="molecule type" value="Genomic_DNA"/>
</dbReference>
<dbReference type="EMBL" id="AE017225">
    <property type="protein sequence ID" value="AAT56645.1"/>
    <property type="molecule type" value="Genomic_DNA"/>
</dbReference>
<dbReference type="RefSeq" id="NP_846895.1">
    <property type="nucleotide sequence ID" value="NC_003997.3"/>
</dbReference>
<dbReference type="RefSeq" id="WP_000391517.1">
    <property type="nucleotide sequence ID" value="NZ_WXXJ01000027.1"/>
</dbReference>
<dbReference type="RefSeq" id="YP_030594.1">
    <property type="nucleotide sequence ID" value="NC_005945.1"/>
</dbReference>
<dbReference type="SMR" id="Q81LE1"/>
<dbReference type="STRING" id="261594.GBAA_4681"/>
<dbReference type="DNASU" id="1083742"/>
<dbReference type="GeneID" id="93006651"/>
<dbReference type="KEGG" id="ban:BA_4681"/>
<dbReference type="KEGG" id="bar:GBAA_4681"/>
<dbReference type="KEGG" id="bat:BAS4347"/>
<dbReference type="PATRIC" id="fig|198094.11.peg.4647"/>
<dbReference type="eggNOG" id="COG0850">
    <property type="taxonomic scope" value="Bacteria"/>
</dbReference>
<dbReference type="HOGENOM" id="CLU_048711_1_1_9"/>
<dbReference type="OMA" id="EMECAYI"/>
<dbReference type="OrthoDB" id="9790810at2"/>
<dbReference type="Proteomes" id="UP000000427">
    <property type="component" value="Chromosome"/>
</dbReference>
<dbReference type="Proteomes" id="UP000000594">
    <property type="component" value="Chromosome"/>
</dbReference>
<dbReference type="GO" id="GO:0000902">
    <property type="term" value="P:cell morphogenesis"/>
    <property type="evidence" value="ECO:0007669"/>
    <property type="project" value="InterPro"/>
</dbReference>
<dbReference type="GO" id="GO:0000917">
    <property type="term" value="P:division septum assembly"/>
    <property type="evidence" value="ECO:0007669"/>
    <property type="project" value="UniProtKB-KW"/>
</dbReference>
<dbReference type="GO" id="GO:1901891">
    <property type="term" value="P:regulation of cell septum assembly"/>
    <property type="evidence" value="ECO:0007669"/>
    <property type="project" value="InterPro"/>
</dbReference>
<dbReference type="FunFam" id="2.160.20.70:FF:000003">
    <property type="entry name" value="Probable septum site-determining protein MinC"/>
    <property type="match status" value="1"/>
</dbReference>
<dbReference type="FunFam" id="3.30.160.540:FF:000001">
    <property type="entry name" value="Probable septum site-determining protein MinC"/>
    <property type="match status" value="1"/>
</dbReference>
<dbReference type="Gene3D" id="2.160.20.70">
    <property type="match status" value="1"/>
</dbReference>
<dbReference type="Gene3D" id="3.30.160.540">
    <property type="match status" value="1"/>
</dbReference>
<dbReference type="HAMAP" id="MF_00267">
    <property type="entry name" value="MinC"/>
    <property type="match status" value="1"/>
</dbReference>
<dbReference type="InterPro" id="IPR016098">
    <property type="entry name" value="CAP/MinC_C"/>
</dbReference>
<dbReference type="InterPro" id="IPR013033">
    <property type="entry name" value="MinC"/>
</dbReference>
<dbReference type="InterPro" id="IPR036145">
    <property type="entry name" value="MinC_C_sf"/>
</dbReference>
<dbReference type="InterPro" id="IPR055219">
    <property type="entry name" value="MinC_N_1"/>
</dbReference>
<dbReference type="InterPro" id="IPR005526">
    <property type="entry name" value="Septum_form_inhib_MinC_C"/>
</dbReference>
<dbReference type="NCBIfam" id="TIGR01222">
    <property type="entry name" value="minC"/>
    <property type="match status" value="1"/>
</dbReference>
<dbReference type="PANTHER" id="PTHR34108">
    <property type="entry name" value="SEPTUM SITE-DETERMINING PROTEIN MINC"/>
    <property type="match status" value="1"/>
</dbReference>
<dbReference type="PANTHER" id="PTHR34108:SF1">
    <property type="entry name" value="SEPTUM SITE-DETERMINING PROTEIN MINC"/>
    <property type="match status" value="1"/>
</dbReference>
<dbReference type="Pfam" id="PF03775">
    <property type="entry name" value="MinC_C"/>
    <property type="match status" value="1"/>
</dbReference>
<dbReference type="Pfam" id="PF22642">
    <property type="entry name" value="MinC_N_1"/>
    <property type="match status" value="1"/>
</dbReference>
<dbReference type="SUPFAM" id="SSF63848">
    <property type="entry name" value="Cell-division inhibitor MinC, C-terminal domain"/>
    <property type="match status" value="1"/>
</dbReference>
<organism>
    <name type="scientific">Bacillus anthracis</name>
    <dbReference type="NCBI Taxonomy" id="1392"/>
    <lineage>
        <taxon>Bacteria</taxon>
        <taxon>Bacillati</taxon>
        <taxon>Bacillota</taxon>
        <taxon>Bacilli</taxon>
        <taxon>Bacillales</taxon>
        <taxon>Bacillaceae</taxon>
        <taxon>Bacillus</taxon>
        <taxon>Bacillus cereus group</taxon>
    </lineage>
</organism>
<feature type="chain" id="PRO_0000189013" description="Probable septum site-determining protein MinC">
    <location>
        <begin position="1"/>
        <end position="228"/>
    </location>
</feature>
<keyword id="KW-0131">Cell cycle</keyword>
<keyword id="KW-0132">Cell division</keyword>
<keyword id="KW-1185">Reference proteome</keyword>
<keyword id="KW-0717">Septation</keyword>
<evidence type="ECO:0000255" key="1">
    <source>
        <dbReference type="HAMAP-Rule" id="MF_00267"/>
    </source>
</evidence>
<proteinExistence type="inferred from homology"/>
<gene>
    <name evidence="1" type="primary">minC</name>
    <name type="ordered locus">BA_4681</name>
    <name type="ordered locus">GBAA_4681</name>
    <name type="ordered locus">BAS4347</name>
</gene>
<name>MINC_BACAN</name>
<accession>Q81LE1</accession>
<accession>Q6HSU4</accession>
<accession>Q6KM37</accession>
<protein>
    <recommendedName>
        <fullName evidence="1">Probable septum site-determining protein MinC</fullName>
    </recommendedName>
</protein>
<reference key="1">
    <citation type="journal article" date="2003" name="Nature">
        <title>The genome sequence of Bacillus anthracis Ames and comparison to closely related bacteria.</title>
        <authorList>
            <person name="Read T.D."/>
            <person name="Peterson S.N."/>
            <person name="Tourasse N.J."/>
            <person name="Baillie L.W."/>
            <person name="Paulsen I.T."/>
            <person name="Nelson K.E."/>
            <person name="Tettelin H."/>
            <person name="Fouts D.E."/>
            <person name="Eisen J.A."/>
            <person name="Gill S.R."/>
            <person name="Holtzapple E.K."/>
            <person name="Okstad O.A."/>
            <person name="Helgason E."/>
            <person name="Rilstone J."/>
            <person name="Wu M."/>
            <person name="Kolonay J.F."/>
            <person name="Beanan M.J."/>
            <person name="Dodson R.J."/>
            <person name="Brinkac L.M."/>
            <person name="Gwinn M.L."/>
            <person name="DeBoy R.T."/>
            <person name="Madpu R."/>
            <person name="Daugherty S.C."/>
            <person name="Durkin A.S."/>
            <person name="Haft D.H."/>
            <person name="Nelson W.C."/>
            <person name="Peterson J.D."/>
            <person name="Pop M."/>
            <person name="Khouri H.M."/>
            <person name="Radune D."/>
            <person name="Benton J.L."/>
            <person name="Mahamoud Y."/>
            <person name="Jiang L."/>
            <person name="Hance I.R."/>
            <person name="Weidman J.F."/>
            <person name="Berry K.J."/>
            <person name="Plaut R.D."/>
            <person name="Wolf A.M."/>
            <person name="Watkins K.L."/>
            <person name="Nierman W.C."/>
            <person name="Hazen A."/>
            <person name="Cline R.T."/>
            <person name="Redmond C."/>
            <person name="Thwaite J.E."/>
            <person name="White O."/>
            <person name="Salzberg S.L."/>
            <person name="Thomason B."/>
            <person name="Friedlander A.M."/>
            <person name="Koehler T.M."/>
            <person name="Hanna P.C."/>
            <person name="Kolstoe A.-B."/>
            <person name="Fraser C.M."/>
        </authorList>
    </citation>
    <scope>NUCLEOTIDE SEQUENCE [LARGE SCALE GENOMIC DNA]</scope>
    <source>
        <strain>Ames / isolate Porton</strain>
    </source>
</reference>
<reference key="2">
    <citation type="journal article" date="2009" name="J. Bacteriol.">
        <title>The complete genome sequence of Bacillus anthracis Ames 'Ancestor'.</title>
        <authorList>
            <person name="Ravel J."/>
            <person name="Jiang L."/>
            <person name="Stanley S.T."/>
            <person name="Wilson M.R."/>
            <person name="Decker R.S."/>
            <person name="Read T.D."/>
            <person name="Worsham P."/>
            <person name="Keim P.S."/>
            <person name="Salzberg S.L."/>
            <person name="Fraser-Liggett C.M."/>
            <person name="Rasko D.A."/>
        </authorList>
    </citation>
    <scope>NUCLEOTIDE SEQUENCE [LARGE SCALE GENOMIC DNA]</scope>
    <source>
        <strain>Ames ancestor</strain>
    </source>
</reference>
<reference key="3">
    <citation type="submission" date="2004-01" db="EMBL/GenBank/DDBJ databases">
        <title>Complete genome sequence of Bacillus anthracis Sterne.</title>
        <authorList>
            <person name="Brettin T.S."/>
            <person name="Bruce D."/>
            <person name="Challacombe J.F."/>
            <person name="Gilna P."/>
            <person name="Han C."/>
            <person name="Hill K."/>
            <person name="Hitchcock P."/>
            <person name="Jackson P."/>
            <person name="Keim P."/>
            <person name="Longmire J."/>
            <person name="Lucas S."/>
            <person name="Okinaka R."/>
            <person name="Richardson P."/>
            <person name="Rubin E."/>
            <person name="Tice H."/>
        </authorList>
    </citation>
    <scope>NUCLEOTIDE SEQUENCE [LARGE SCALE GENOMIC DNA]</scope>
    <source>
        <strain>Sterne</strain>
    </source>
</reference>
<sequence length="228" mass="25229">MEEKKQQNVTIKGTKDGITLHLDDCCSFSELLKELDEKLSTHYYDGDGRSLIEVHVKVGNRYLTEVQQEEIRTLIRNKKNLVVDSIESDVITKEEAIAWKEETEIVPISKIVRSGQVLHVKGNLLLIGDVNPGGTVIAGGNIFVVGSLRGIAHAGYYGDSDAVIAASVMNPMQLRISDVAMRAPEEKEDGAEAAECAYINENNHIVVDRLQLLTHLRPNLTKLERGIV</sequence>